<protein>
    <recommendedName>
        <fullName evidence="2">Large neutral amino acids transporter small subunit 4</fullName>
    </recommendedName>
    <alternativeName>
        <fullName>L-type amino acid transporter 4</fullName>
    </alternativeName>
    <alternativeName>
        <fullName>Solute carrier family 43 member 2</fullName>
    </alternativeName>
</protein>
<feature type="chain" id="PRO_0000307271" description="Large neutral amino acids transporter small subunit 4">
    <location>
        <begin position="1"/>
        <end position="568"/>
    </location>
</feature>
<feature type="transmembrane region" description="Helical" evidence="3">
    <location>
        <begin position="20"/>
        <end position="40"/>
    </location>
</feature>
<feature type="transmembrane region" description="Helical" evidence="3">
    <location>
        <begin position="90"/>
        <end position="110"/>
    </location>
</feature>
<feature type="transmembrane region" description="Helical" evidence="3">
    <location>
        <begin position="120"/>
        <end position="140"/>
    </location>
</feature>
<feature type="transmembrane region" description="Helical" evidence="3">
    <location>
        <begin position="143"/>
        <end position="163"/>
    </location>
</feature>
<feature type="transmembrane region" description="Helical" evidence="3">
    <location>
        <begin position="180"/>
        <end position="200"/>
    </location>
</feature>
<feature type="transmembrane region" description="Helical" evidence="3">
    <location>
        <begin position="203"/>
        <end position="223"/>
    </location>
</feature>
<feature type="transmembrane region" description="Helical" evidence="3">
    <location>
        <begin position="313"/>
        <end position="333"/>
    </location>
</feature>
<feature type="transmembrane region" description="Helical" evidence="3">
    <location>
        <begin position="365"/>
        <end position="385"/>
    </location>
</feature>
<feature type="transmembrane region" description="Helical" evidence="3">
    <location>
        <begin position="434"/>
        <end position="454"/>
    </location>
</feature>
<feature type="transmembrane region" description="Helical" evidence="3">
    <location>
        <begin position="461"/>
        <end position="481"/>
    </location>
</feature>
<feature type="transmembrane region" description="Helical" evidence="3">
    <location>
        <begin position="489"/>
        <end position="509"/>
    </location>
</feature>
<feature type="transmembrane region" description="Helical" evidence="3">
    <location>
        <begin position="515"/>
        <end position="535"/>
    </location>
</feature>
<feature type="region of interest" description="Disordered" evidence="4">
    <location>
        <begin position="395"/>
        <end position="415"/>
    </location>
</feature>
<feature type="modified residue" description="Phosphoserine" evidence="2">
    <location>
        <position position="274"/>
    </location>
</feature>
<feature type="modified residue" description="Phosphoserine" evidence="2">
    <location>
        <position position="278"/>
    </location>
</feature>
<feature type="modified residue" description="Phosphoserine" evidence="2">
    <location>
        <position position="297"/>
    </location>
</feature>
<feature type="glycosylation site" description="N-linked (GlcNAc...) asparagine" evidence="3">
    <location>
        <position position="55"/>
    </location>
</feature>
<feature type="glycosylation site" description="N-linked (GlcNAc...) asparagine" evidence="3">
    <location>
        <position position="58"/>
    </location>
</feature>
<feature type="glycosylation site" description="N-linked (GlcNAc...) asparagine" evidence="3">
    <location>
        <position position="559"/>
    </location>
</feature>
<organism>
    <name type="scientific">Bos taurus</name>
    <name type="common">Bovine</name>
    <dbReference type="NCBI Taxonomy" id="9913"/>
    <lineage>
        <taxon>Eukaryota</taxon>
        <taxon>Metazoa</taxon>
        <taxon>Chordata</taxon>
        <taxon>Craniata</taxon>
        <taxon>Vertebrata</taxon>
        <taxon>Euteleostomi</taxon>
        <taxon>Mammalia</taxon>
        <taxon>Eutheria</taxon>
        <taxon>Laurasiatheria</taxon>
        <taxon>Artiodactyla</taxon>
        <taxon>Ruminantia</taxon>
        <taxon>Pecora</taxon>
        <taxon>Bovidae</taxon>
        <taxon>Bovinae</taxon>
        <taxon>Bos</taxon>
    </lineage>
</organism>
<name>LAT4_BOVIN</name>
<dbReference type="EMBL" id="BC120095">
    <property type="protein sequence ID" value="AAI20096.1"/>
    <property type="molecule type" value="mRNA"/>
</dbReference>
<dbReference type="EMBL" id="BC147877">
    <property type="protein sequence ID" value="AAI47878.1"/>
    <property type="molecule type" value="mRNA"/>
</dbReference>
<dbReference type="RefSeq" id="NP_001069014.1">
    <property type="nucleotide sequence ID" value="NM_001075546.1"/>
</dbReference>
<dbReference type="RefSeq" id="XP_024835738.1">
    <property type="nucleotide sequence ID" value="XM_024979970.2"/>
</dbReference>
<dbReference type="RefSeq" id="XP_024835739.1">
    <property type="nucleotide sequence ID" value="XM_024979971.2"/>
</dbReference>
<dbReference type="FunCoup" id="Q0VCM6">
    <property type="interactions" value="178"/>
</dbReference>
<dbReference type="STRING" id="9913.ENSBTAP00000015260"/>
<dbReference type="GlyCosmos" id="Q0VCM6">
    <property type="glycosylation" value="3 sites, No reported glycans"/>
</dbReference>
<dbReference type="GlyGen" id="Q0VCM6">
    <property type="glycosylation" value="3 sites"/>
</dbReference>
<dbReference type="PaxDb" id="9913-ENSBTAP00000015260"/>
<dbReference type="GeneID" id="511955"/>
<dbReference type="KEGG" id="bta:511955"/>
<dbReference type="CTD" id="124935"/>
<dbReference type="VEuPathDB" id="HostDB:ENSBTAG00000011482"/>
<dbReference type="eggNOG" id="ENOG502QTQJ">
    <property type="taxonomic scope" value="Eukaryota"/>
</dbReference>
<dbReference type="HOGENOM" id="CLU_035676_0_0_1"/>
<dbReference type="InParanoid" id="Q0VCM6"/>
<dbReference type="OMA" id="LQMIRMN"/>
<dbReference type="OrthoDB" id="330047at2759"/>
<dbReference type="TreeFam" id="TF328358"/>
<dbReference type="Reactome" id="R-BTA-352230">
    <property type="pathway name" value="Amino acid transport across the plasma membrane"/>
</dbReference>
<dbReference type="Proteomes" id="UP000009136">
    <property type="component" value="Chromosome 19"/>
</dbReference>
<dbReference type="Bgee" id="ENSBTAG00000011482">
    <property type="expression patterns" value="Expressed in choroid plexus and 106 other cell types or tissues"/>
</dbReference>
<dbReference type="GO" id="GO:0016323">
    <property type="term" value="C:basolateral plasma membrane"/>
    <property type="evidence" value="ECO:0000250"/>
    <property type="project" value="UniProtKB"/>
</dbReference>
<dbReference type="GO" id="GO:0015179">
    <property type="term" value="F:L-amino acid transmembrane transporter activity"/>
    <property type="evidence" value="ECO:0000318"/>
    <property type="project" value="GO_Central"/>
</dbReference>
<dbReference type="GO" id="GO:0015188">
    <property type="term" value="F:L-isoleucine transmembrane transporter activity"/>
    <property type="evidence" value="ECO:0000250"/>
    <property type="project" value="UniProtKB"/>
</dbReference>
<dbReference type="GO" id="GO:0015190">
    <property type="term" value="F:L-leucine transmembrane transporter activity"/>
    <property type="evidence" value="ECO:0000250"/>
    <property type="project" value="UniProtKB"/>
</dbReference>
<dbReference type="GO" id="GO:0015191">
    <property type="term" value="F:L-methionine transmembrane transporter activity"/>
    <property type="evidence" value="ECO:0000250"/>
    <property type="project" value="UniProtKB"/>
</dbReference>
<dbReference type="GO" id="GO:0015192">
    <property type="term" value="F:L-phenylalanine transmembrane transporter activity"/>
    <property type="evidence" value="ECO:0000250"/>
    <property type="project" value="UniProtKB"/>
</dbReference>
<dbReference type="GO" id="GO:0015175">
    <property type="term" value="F:neutral L-amino acid transmembrane transporter activity"/>
    <property type="evidence" value="ECO:0000318"/>
    <property type="project" value="GO_Central"/>
</dbReference>
<dbReference type="GO" id="GO:0015818">
    <property type="term" value="P:isoleucine transport"/>
    <property type="evidence" value="ECO:0000250"/>
    <property type="project" value="UniProtKB"/>
</dbReference>
<dbReference type="GO" id="GO:0015820">
    <property type="term" value="P:L-leucine transport"/>
    <property type="evidence" value="ECO:0000250"/>
    <property type="project" value="UniProtKB"/>
</dbReference>
<dbReference type="GO" id="GO:0015821">
    <property type="term" value="P:methionine transport"/>
    <property type="evidence" value="ECO:0000250"/>
    <property type="project" value="UniProtKB"/>
</dbReference>
<dbReference type="GO" id="GO:0015804">
    <property type="term" value="P:neutral amino acid transport"/>
    <property type="evidence" value="ECO:0000318"/>
    <property type="project" value="GO_Central"/>
</dbReference>
<dbReference type="GO" id="GO:0015823">
    <property type="term" value="P:phenylalanine transport"/>
    <property type="evidence" value="ECO:0000250"/>
    <property type="project" value="UniProtKB"/>
</dbReference>
<dbReference type="CDD" id="cd06174">
    <property type="entry name" value="MFS"/>
    <property type="match status" value="1"/>
</dbReference>
<dbReference type="Gene3D" id="1.20.1250.20">
    <property type="entry name" value="MFS general substrate transporter like domains"/>
    <property type="match status" value="1"/>
</dbReference>
<dbReference type="InterPro" id="IPR011701">
    <property type="entry name" value="MFS"/>
</dbReference>
<dbReference type="InterPro" id="IPR036259">
    <property type="entry name" value="MFS_trans_sf"/>
</dbReference>
<dbReference type="PANTHER" id="PTHR20766:SF2">
    <property type="entry name" value="LARGE NEUTRAL AMINO ACIDS TRANSPORTER SMALL SUBUNIT 4"/>
    <property type="match status" value="1"/>
</dbReference>
<dbReference type="PANTHER" id="PTHR20766">
    <property type="entry name" value="LARGE NEUTRAL AMINO ACIDS TRANSPORTER SMALL SUBUNIT 4-LIKE ISOFORM X1"/>
    <property type="match status" value="1"/>
</dbReference>
<dbReference type="Pfam" id="PF07690">
    <property type="entry name" value="MFS_1"/>
    <property type="match status" value="1"/>
</dbReference>
<dbReference type="SUPFAM" id="SSF103473">
    <property type="entry name" value="MFS general substrate transporter"/>
    <property type="match status" value="1"/>
</dbReference>
<reference key="1">
    <citation type="submission" date="2006-08" db="EMBL/GenBank/DDBJ databases">
        <authorList>
            <consortium name="NIH - Mammalian Gene Collection (MGC) project"/>
        </authorList>
    </citation>
    <scope>NUCLEOTIDE SEQUENCE [LARGE SCALE MRNA]</scope>
    <source>
        <strain>Hereford</strain>
        <tissue>Fetal liver</tissue>
    </source>
</reference>
<proteinExistence type="evidence at transcript level"/>
<gene>
    <name evidence="2" type="primary">SLC43A2</name>
    <name type="synonym">LAT4</name>
</gene>
<comment type="function">
    <text evidence="2">Uniporter that mediates the transport of the stereospecific L-phenylalanine, L-methionine and L-branched-chain amino acids, between the extracellular space and the cytoplasm and may control the transepithelial (re)absorption of neutral amino acid in kidney and small intestine. The transport activity is mediated through facilitated diffusion and is sodium ions-, chloride ions- and pH-independent.</text>
</comment>
<comment type="catalytic activity">
    <reaction evidence="2">
        <text>L-leucine(in) = L-leucine(out)</text>
        <dbReference type="Rhea" id="RHEA:73011"/>
        <dbReference type="ChEBI" id="CHEBI:57427"/>
    </reaction>
</comment>
<comment type="catalytic activity">
    <reaction evidence="2">
        <text>L-isoleucine(in) = L-isoleucine(out)</text>
        <dbReference type="Rhea" id="RHEA:70943"/>
        <dbReference type="ChEBI" id="CHEBI:58045"/>
    </reaction>
</comment>
<comment type="catalytic activity">
    <reaction evidence="2">
        <text>L-methionine(in) = L-methionine(out)</text>
        <dbReference type="Rhea" id="RHEA:70939"/>
        <dbReference type="ChEBI" id="CHEBI:57844"/>
    </reaction>
</comment>
<comment type="catalytic activity">
    <reaction evidence="2">
        <text>L-phenylalanine(in) = L-phenylalanine(out)</text>
        <dbReference type="Rhea" id="RHEA:27950"/>
        <dbReference type="ChEBI" id="CHEBI:58095"/>
    </reaction>
</comment>
<comment type="activity regulation">
    <text evidence="2">Affinity and transport activity are regulated by a phosphorylation switch state at Ser-274 and Ser-297; increasing of affinity and amino acid transport activity via dephosphorylation at Ser-274 and phosphorylation at Ser-297.</text>
</comment>
<comment type="subcellular location">
    <subcellularLocation>
        <location evidence="1">Cell membrane</location>
        <topology evidence="3">Multi-pass membrane protein</topology>
    </subcellularLocation>
    <subcellularLocation>
        <location evidence="1">Basolateral cell membrane</location>
    </subcellularLocation>
    <text evidence="1">Located at the basolateral membrane in the small intestine enterocytes, kidney proximal tubule, thick ascending limb and, to a minor extent, of distal convoluted tubule epithelial cells.</text>
</comment>
<comment type="PTM">
    <text evidence="2">Glycosylated.</text>
</comment>
<comment type="PTM">
    <text evidence="1">Dephosphorylation at Ser-274 and phosphorylation at Ser-297 increase affinity and amino acid transport activity. Phosphorylation-dephosphorylation cycle is regulated by food-entrained diurnal rhythm and dietary proteins.</text>
</comment>
<comment type="similarity">
    <text evidence="5">Belongs to the SLC43A transporter (TC 2.A.1.44) family.</text>
</comment>
<sequence>MAPTLATAHRRRWWMACTAVVENLLFSAVLLGWGSLLIMLKSEGFYSYLCTEPENVTNVTVGATAEPEHEEVSRMNGWLSCKAQDEMLNLAFTVGSFLLSAITLPLGIVMDKYGPRKLRLLGSACFAVSCLLIAYGASNPNSLSVLIFIALALNGFGGMCMTFTSLTLPNMFGDLRSTFIALMIGSYASSAVTFPGVKVIYDFGASFIVILVVWAGCSGLVFLNCFFNWPLEPFPGPEDMDYTVKIKFSWLGFDHKITGKQFYKQVTTVGRRLSVGSSMRSAKEQAALQEGHKLCLSTVDLEVKCQPDATAAPSFMHSVFSPILLLSLVTMCVTQLRLIFYMGAMNNILQFLVSGDQAVVSLYTSIFGVLQLLCLLTAPVIGYIMDWRLKECEDASEEPEEKDANPGEKKKKRDRQIQKITNATRAFAFTNLLLVGFGVTCLIPNLPLQILSFILHTIVRGFIHSAVGGLYAAVYPSTQFGSLTGLQSLISALFALLQQPLFLAMMGPLQGDPLWVNVGLLVVSMLGFCLPLYLICYRRQLERQLERKREDDKLFLKLNGSSNQEAFV</sequence>
<evidence type="ECO:0000250" key="1">
    <source>
        <dbReference type="UniProtKB" id="Q8CGA3"/>
    </source>
</evidence>
<evidence type="ECO:0000250" key="2">
    <source>
        <dbReference type="UniProtKB" id="Q8N370"/>
    </source>
</evidence>
<evidence type="ECO:0000255" key="3"/>
<evidence type="ECO:0000256" key="4">
    <source>
        <dbReference type="SAM" id="MobiDB-lite"/>
    </source>
</evidence>
<evidence type="ECO:0000305" key="5"/>
<keyword id="KW-0029">Amino-acid transport</keyword>
<keyword id="KW-1003">Cell membrane</keyword>
<keyword id="KW-0325">Glycoprotein</keyword>
<keyword id="KW-0472">Membrane</keyword>
<keyword id="KW-0597">Phosphoprotein</keyword>
<keyword id="KW-1185">Reference proteome</keyword>
<keyword id="KW-0812">Transmembrane</keyword>
<keyword id="KW-1133">Transmembrane helix</keyword>
<keyword id="KW-0813">Transport</keyword>
<accession>Q0VCM6</accession>